<dbReference type="EC" id="2.5.1.3" evidence="1"/>
<dbReference type="EMBL" id="CP000304">
    <property type="protein sequence ID" value="ABP81380.1"/>
    <property type="molecule type" value="Genomic_DNA"/>
</dbReference>
<dbReference type="RefSeq" id="WP_011914765.1">
    <property type="nucleotide sequence ID" value="NC_009434.1"/>
</dbReference>
<dbReference type="SMR" id="A4VQX9"/>
<dbReference type="GeneID" id="66823019"/>
<dbReference type="KEGG" id="psa:PST_3757"/>
<dbReference type="eggNOG" id="COG0352">
    <property type="taxonomic scope" value="Bacteria"/>
</dbReference>
<dbReference type="HOGENOM" id="CLU_018272_3_1_6"/>
<dbReference type="UniPathway" id="UPA00060">
    <property type="reaction ID" value="UER00141"/>
</dbReference>
<dbReference type="Proteomes" id="UP000000233">
    <property type="component" value="Chromosome"/>
</dbReference>
<dbReference type="GO" id="GO:0005737">
    <property type="term" value="C:cytoplasm"/>
    <property type="evidence" value="ECO:0007669"/>
    <property type="project" value="TreeGrafter"/>
</dbReference>
<dbReference type="GO" id="GO:0000287">
    <property type="term" value="F:magnesium ion binding"/>
    <property type="evidence" value="ECO:0007669"/>
    <property type="project" value="UniProtKB-UniRule"/>
</dbReference>
<dbReference type="GO" id="GO:0004789">
    <property type="term" value="F:thiamine-phosphate diphosphorylase activity"/>
    <property type="evidence" value="ECO:0007669"/>
    <property type="project" value="UniProtKB-UniRule"/>
</dbReference>
<dbReference type="GO" id="GO:0009228">
    <property type="term" value="P:thiamine biosynthetic process"/>
    <property type="evidence" value="ECO:0007669"/>
    <property type="project" value="UniProtKB-KW"/>
</dbReference>
<dbReference type="GO" id="GO:0009229">
    <property type="term" value="P:thiamine diphosphate biosynthetic process"/>
    <property type="evidence" value="ECO:0007669"/>
    <property type="project" value="UniProtKB-UniRule"/>
</dbReference>
<dbReference type="CDD" id="cd00564">
    <property type="entry name" value="TMP_TenI"/>
    <property type="match status" value="1"/>
</dbReference>
<dbReference type="Gene3D" id="3.20.20.70">
    <property type="entry name" value="Aldolase class I"/>
    <property type="match status" value="1"/>
</dbReference>
<dbReference type="HAMAP" id="MF_00097">
    <property type="entry name" value="TMP_synthase"/>
    <property type="match status" value="1"/>
</dbReference>
<dbReference type="InterPro" id="IPR013785">
    <property type="entry name" value="Aldolase_TIM"/>
</dbReference>
<dbReference type="InterPro" id="IPR036206">
    <property type="entry name" value="ThiamineP_synth_sf"/>
</dbReference>
<dbReference type="InterPro" id="IPR022998">
    <property type="entry name" value="ThiamineP_synth_TenI"/>
</dbReference>
<dbReference type="InterPro" id="IPR034291">
    <property type="entry name" value="TMP_synthase"/>
</dbReference>
<dbReference type="NCBIfam" id="TIGR00693">
    <property type="entry name" value="thiE"/>
    <property type="match status" value="1"/>
</dbReference>
<dbReference type="PANTHER" id="PTHR20857">
    <property type="entry name" value="THIAMINE-PHOSPHATE PYROPHOSPHORYLASE"/>
    <property type="match status" value="1"/>
</dbReference>
<dbReference type="PANTHER" id="PTHR20857:SF15">
    <property type="entry name" value="THIAMINE-PHOSPHATE SYNTHASE"/>
    <property type="match status" value="1"/>
</dbReference>
<dbReference type="Pfam" id="PF02581">
    <property type="entry name" value="TMP-TENI"/>
    <property type="match status" value="1"/>
</dbReference>
<dbReference type="SUPFAM" id="SSF51391">
    <property type="entry name" value="Thiamin phosphate synthase"/>
    <property type="match status" value="1"/>
</dbReference>
<keyword id="KW-0460">Magnesium</keyword>
<keyword id="KW-0479">Metal-binding</keyword>
<keyword id="KW-1185">Reference proteome</keyword>
<keyword id="KW-0784">Thiamine biosynthesis</keyword>
<keyword id="KW-0808">Transferase</keyword>
<accession>A4VQX9</accession>
<reference key="1">
    <citation type="journal article" date="2008" name="Proc. Natl. Acad. Sci. U.S.A.">
        <title>Nitrogen fixation island and rhizosphere competence traits in the genome of root-associated Pseudomonas stutzeri A1501.</title>
        <authorList>
            <person name="Yan Y."/>
            <person name="Yang J."/>
            <person name="Dou Y."/>
            <person name="Chen M."/>
            <person name="Ping S."/>
            <person name="Peng J."/>
            <person name="Lu W."/>
            <person name="Zhang W."/>
            <person name="Yao Z."/>
            <person name="Li H."/>
            <person name="Liu W."/>
            <person name="He S."/>
            <person name="Geng L."/>
            <person name="Zhang X."/>
            <person name="Yang F."/>
            <person name="Yu H."/>
            <person name="Zhan Y."/>
            <person name="Li D."/>
            <person name="Lin Z."/>
            <person name="Wang Y."/>
            <person name="Elmerich C."/>
            <person name="Lin M."/>
            <person name="Jin Q."/>
        </authorList>
    </citation>
    <scope>NUCLEOTIDE SEQUENCE [LARGE SCALE GENOMIC DNA]</scope>
    <source>
        <strain>A1501</strain>
    </source>
</reference>
<proteinExistence type="inferred from homology"/>
<sequence>MKESSRLRGLYAITDSKLLADGRLLPYVEAALKGGARLLQYRDKTSDEARRLREADALQELCARHGAQLIINDDAELAARLGVGLHLGQEDGSLAAARALLGRQAIIGATCHAQLPLAEQAARDGASYVAFGRFFQSHTKPGAPAANHELLREARARIGLPIVAIGGITLDTAPSLIAEGVQMIAVIHALFAADSAAEVERRAQAFSQLFNTP</sequence>
<gene>
    <name evidence="1" type="primary">thiE</name>
    <name type="ordered locus">PST_3757</name>
</gene>
<feature type="chain" id="PRO_0000336420" description="Thiamine-phosphate synthase">
    <location>
        <begin position="1"/>
        <end position="213"/>
    </location>
</feature>
<feature type="binding site" evidence="1">
    <location>
        <begin position="40"/>
        <end position="44"/>
    </location>
    <ligand>
        <name>4-amino-2-methyl-5-(diphosphooxymethyl)pyrimidine</name>
        <dbReference type="ChEBI" id="CHEBI:57841"/>
    </ligand>
</feature>
<feature type="binding site" evidence="1">
    <location>
        <position position="72"/>
    </location>
    <ligand>
        <name>4-amino-2-methyl-5-(diphosphooxymethyl)pyrimidine</name>
        <dbReference type="ChEBI" id="CHEBI:57841"/>
    </ligand>
</feature>
<feature type="binding site" evidence="1">
    <location>
        <position position="73"/>
    </location>
    <ligand>
        <name>Mg(2+)</name>
        <dbReference type="ChEBI" id="CHEBI:18420"/>
    </ligand>
</feature>
<feature type="binding site" evidence="1">
    <location>
        <position position="91"/>
    </location>
    <ligand>
        <name>Mg(2+)</name>
        <dbReference type="ChEBI" id="CHEBI:18420"/>
    </ligand>
</feature>
<feature type="binding site" evidence="1">
    <location>
        <position position="110"/>
    </location>
    <ligand>
        <name>4-amino-2-methyl-5-(diphosphooxymethyl)pyrimidine</name>
        <dbReference type="ChEBI" id="CHEBI:57841"/>
    </ligand>
</feature>
<feature type="binding site" evidence="1">
    <location>
        <begin position="137"/>
        <end position="139"/>
    </location>
    <ligand>
        <name>2-[(2R,5Z)-2-carboxy-4-methylthiazol-5(2H)-ylidene]ethyl phosphate</name>
        <dbReference type="ChEBI" id="CHEBI:62899"/>
    </ligand>
</feature>
<feature type="binding site" evidence="1">
    <location>
        <position position="140"/>
    </location>
    <ligand>
        <name>4-amino-2-methyl-5-(diphosphooxymethyl)pyrimidine</name>
        <dbReference type="ChEBI" id="CHEBI:57841"/>
    </ligand>
</feature>
<feature type="binding site" evidence="1">
    <location>
        <position position="167"/>
    </location>
    <ligand>
        <name>2-[(2R,5Z)-2-carboxy-4-methylthiazol-5(2H)-ylidene]ethyl phosphate</name>
        <dbReference type="ChEBI" id="CHEBI:62899"/>
    </ligand>
</feature>
<comment type="function">
    <text evidence="1">Condenses 4-methyl-5-(beta-hydroxyethyl)thiazole monophosphate (THZ-P) and 2-methyl-4-amino-5-hydroxymethyl pyrimidine pyrophosphate (HMP-PP) to form thiamine monophosphate (TMP).</text>
</comment>
<comment type="catalytic activity">
    <reaction evidence="1">
        <text>2-[(2R,5Z)-2-carboxy-4-methylthiazol-5(2H)-ylidene]ethyl phosphate + 4-amino-2-methyl-5-(diphosphooxymethyl)pyrimidine + 2 H(+) = thiamine phosphate + CO2 + diphosphate</text>
        <dbReference type="Rhea" id="RHEA:47844"/>
        <dbReference type="ChEBI" id="CHEBI:15378"/>
        <dbReference type="ChEBI" id="CHEBI:16526"/>
        <dbReference type="ChEBI" id="CHEBI:33019"/>
        <dbReference type="ChEBI" id="CHEBI:37575"/>
        <dbReference type="ChEBI" id="CHEBI:57841"/>
        <dbReference type="ChEBI" id="CHEBI:62899"/>
        <dbReference type="EC" id="2.5.1.3"/>
    </reaction>
</comment>
<comment type="catalytic activity">
    <reaction evidence="1">
        <text>2-(2-carboxy-4-methylthiazol-5-yl)ethyl phosphate + 4-amino-2-methyl-5-(diphosphooxymethyl)pyrimidine + 2 H(+) = thiamine phosphate + CO2 + diphosphate</text>
        <dbReference type="Rhea" id="RHEA:47848"/>
        <dbReference type="ChEBI" id="CHEBI:15378"/>
        <dbReference type="ChEBI" id="CHEBI:16526"/>
        <dbReference type="ChEBI" id="CHEBI:33019"/>
        <dbReference type="ChEBI" id="CHEBI:37575"/>
        <dbReference type="ChEBI" id="CHEBI:57841"/>
        <dbReference type="ChEBI" id="CHEBI:62890"/>
        <dbReference type="EC" id="2.5.1.3"/>
    </reaction>
</comment>
<comment type="catalytic activity">
    <reaction evidence="1">
        <text>4-methyl-5-(2-phosphooxyethyl)-thiazole + 4-amino-2-methyl-5-(diphosphooxymethyl)pyrimidine + H(+) = thiamine phosphate + diphosphate</text>
        <dbReference type="Rhea" id="RHEA:22328"/>
        <dbReference type="ChEBI" id="CHEBI:15378"/>
        <dbReference type="ChEBI" id="CHEBI:33019"/>
        <dbReference type="ChEBI" id="CHEBI:37575"/>
        <dbReference type="ChEBI" id="CHEBI:57841"/>
        <dbReference type="ChEBI" id="CHEBI:58296"/>
        <dbReference type="EC" id="2.5.1.3"/>
    </reaction>
</comment>
<comment type="cofactor">
    <cofactor evidence="1">
        <name>Mg(2+)</name>
        <dbReference type="ChEBI" id="CHEBI:18420"/>
    </cofactor>
    <text evidence="1">Binds 1 Mg(2+) ion per subunit.</text>
</comment>
<comment type="pathway">
    <text evidence="1">Cofactor biosynthesis; thiamine diphosphate biosynthesis; thiamine phosphate from 4-amino-2-methyl-5-diphosphomethylpyrimidine and 4-methyl-5-(2-phosphoethyl)-thiazole: step 1/1.</text>
</comment>
<comment type="similarity">
    <text evidence="1">Belongs to the thiamine-phosphate synthase family.</text>
</comment>
<protein>
    <recommendedName>
        <fullName evidence="1">Thiamine-phosphate synthase</fullName>
        <shortName evidence="1">TP synthase</shortName>
        <shortName evidence="1">TPS</shortName>
        <ecNumber evidence="1">2.5.1.3</ecNumber>
    </recommendedName>
    <alternativeName>
        <fullName evidence="1">Thiamine-phosphate pyrophosphorylase</fullName>
        <shortName evidence="1">TMP pyrophosphorylase</shortName>
        <shortName evidence="1">TMP-PPase</shortName>
    </alternativeName>
</protein>
<name>THIE_STUS1</name>
<evidence type="ECO:0000255" key="1">
    <source>
        <dbReference type="HAMAP-Rule" id="MF_00097"/>
    </source>
</evidence>
<organism>
    <name type="scientific">Stutzerimonas stutzeri (strain A1501)</name>
    <name type="common">Pseudomonas stutzeri</name>
    <dbReference type="NCBI Taxonomy" id="379731"/>
    <lineage>
        <taxon>Bacteria</taxon>
        <taxon>Pseudomonadati</taxon>
        <taxon>Pseudomonadota</taxon>
        <taxon>Gammaproteobacteria</taxon>
        <taxon>Pseudomonadales</taxon>
        <taxon>Pseudomonadaceae</taxon>
        <taxon>Stutzerimonas</taxon>
    </lineage>
</organism>